<organism>
    <name type="scientific">Mesorhizobium japonicum (strain LMG 29417 / CECT 9101 / MAFF 303099)</name>
    <name type="common">Mesorhizobium loti (strain MAFF 303099)</name>
    <dbReference type="NCBI Taxonomy" id="266835"/>
    <lineage>
        <taxon>Bacteria</taxon>
        <taxon>Pseudomonadati</taxon>
        <taxon>Pseudomonadota</taxon>
        <taxon>Alphaproteobacteria</taxon>
        <taxon>Hyphomicrobiales</taxon>
        <taxon>Phyllobacteriaceae</taxon>
        <taxon>Mesorhizobium</taxon>
    </lineage>
</organism>
<gene>
    <name evidence="2" type="primary">trmB</name>
    <name type="ordered locus">mlr5547</name>
</gene>
<name>TRMB_RHILO</name>
<sequence>MSPQDRPSRTTEAFFGRRRGKPVRPQQAAALESGLDAYRLDLTADAPSDLRTLFETEVSAVRLEIGFGGGEHLLHRAIEAPTTGFIGVEPFVNGMAKMMMAVRARPLANLRVHDDDATRLLDWLPPASLGGIDLLYPDPWPKKKHWKRRFVSPVNLERFARVLKPGAKFRFASDIDTYVNWTLLHCRAHGAFAWQAAEAADWHRPYEGWPGTRYEAKAIREGRRPAYLTFVRK</sequence>
<dbReference type="EC" id="2.1.1.33" evidence="2"/>
<dbReference type="EMBL" id="BA000012">
    <property type="protein sequence ID" value="BAB51979.1"/>
    <property type="status" value="ALT_INIT"/>
    <property type="molecule type" value="Genomic_DNA"/>
</dbReference>
<dbReference type="RefSeq" id="WP_044551168.1">
    <property type="nucleotide sequence ID" value="NC_002678.2"/>
</dbReference>
<dbReference type="SMR" id="Q98BJ3"/>
<dbReference type="KEGG" id="mlo:mlr5547"/>
<dbReference type="PATRIC" id="fig|266835.9.peg.4411"/>
<dbReference type="eggNOG" id="COG0220">
    <property type="taxonomic scope" value="Bacteria"/>
</dbReference>
<dbReference type="HOGENOM" id="CLU_050910_0_3_5"/>
<dbReference type="UniPathway" id="UPA00989"/>
<dbReference type="Proteomes" id="UP000000552">
    <property type="component" value="Chromosome"/>
</dbReference>
<dbReference type="GO" id="GO:0043527">
    <property type="term" value="C:tRNA methyltransferase complex"/>
    <property type="evidence" value="ECO:0007669"/>
    <property type="project" value="TreeGrafter"/>
</dbReference>
<dbReference type="GO" id="GO:0008176">
    <property type="term" value="F:tRNA (guanine(46)-N7)-methyltransferase activity"/>
    <property type="evidence" value="ECO:0007669"/>
    <property type="project" value="UniProtKB-UniRule"/>
</dbReference>
<dbReference type="Gene3D" id="3.40.50.150">
    <property type="entry name" value="Vaccinia Virus protein VP39"/>
    <property type="match status" value="1"/>
</dbReference>
<dbReference type="HAMAP" id="MF_01057">
    <property type="entry name" value="tRNA_methyltr_TrmB"/>
    <property type="match status" value="1"/>
</dbReference>
<dbReference type="InterPro" id="IPR029063">
    <property type="entry name" value="SAM-dependent_MTases_sf"/>
</dbReference>
<dbReference type="InterPro" id="IPR003358">
    <property type="entry name" value="tRNA_(Gua-N-7)_MeTrfase_Trmb"/>
</dbReference>
<dbReference type="InterPro" id="IPR055361">
    <property type="entry name" value="tRNA_methyltr_TrmB_bact"/>
</dbReference>
<dbReference type="PANTHER" id="PTHR23417">
    <property type="entry name" value="3-DEOXY-D-MANNO-OCTULOSONIC-ACID TRANSFERASE/TRNA GUANINE-N 7 - -METHYLTRANSFERASE"/>
    <property type="match status" value="1"/>
</dbReference>
<dbReference type="PANTHER" id="PTHR23417:SF14">
    <property type="entry name" value="PENTACOTRIPEPTIDE-REPEAT REGION OF PRORP DOMAIN-CONTAINING PROTEIN"/>
    <property type="match status" value="1"/>
</dbReference>
<dbReference type="Pfam" id="PF02390">
    <property type="entry name" value="Methyltransf_4"/>
    <property type="match status" value="1"/>
</dbReference>
<dbReference type="SUPFAM" id="SSF53335">
    <property type="entry name" value="S-adenosyl-L-methionine-dependent methyltransferases"/>
    <property type="match status" value="1"/>
</dbReference>
<dbReference type="PROSITE" id="PS51625">
    <property type="entry name" value="SAM_MT_TRMB"/>
    <property type="match status" value="1"/>
</dbReference>
<comment type="function">
    <text evidence="2">Catalyzes the formation of N(7)-methylguanine at position 46 (m7G46) in tRNA.</text>
</comment>
<comment type="catalytic activity">
    <reaction evidence="2">
        <text>guanosine(46) in tRNA + S-adenosyl-L-methionine = N(7)-methylguanosine(46) in tRNA + S-adenosyl-L-homocysteine</text>
        <dbReference type="Rhea" id="RHEA:42708"/>
        <dbReference type="Rhea" id="RHEA-COMP:10188"/>
        <dbReference type="Rhea" id="RHEA-COMP:10189"/>
        <dbReference type="ChEBI" id="CHEBI:57856"/>
        <dbReference type="ChEBI" id="CHEBI:59789"/>
        <dbReference type="ChEBI" id="CHEBI:74269"/>
        <dbReference type="ChEBI" id="CHEBI:74480"/>
        <dbReference type="EC" id="2.1.1.33"/>
    </reaction>
</comment>
<comment type="pathway">
    <text evidence="2">tRNA modification; N(7)-methylguanine-tRNA biosynthesis.</text>
</comment>
<comment type="similarity">
    <text evidence="2">Belongs to the class I-like SAM-binding methyltransferase superfamily. TrmB family.</text>
</comment>
<comment type="sequence caution" evidence="4">
    <conflict type="erroneous initiation">
        <sequence resource="EMBL-CDS" id="BAB51979"/>
    </conflict>
</comment>
<protein>
    <recommendedName>
        <fullName evidence="2">tRNA (guanine-N(7)-)-methyltransferase</fullName>
        <ecNumber evidence="2">2.1.1.33</ecNumber>
    </recommendedName>
    <alternativeName>
        <fullName evidence="2">tRNA (guanine(46)-N(7))-methyltransferase</fullName>
    </alternativeName>
    <alternativeName>
        <fullName evidence="2">tRNA(m7G46)-methyltransferase</fullName>
    </alternativeName>
</protein>
<proteinExistence type="inferred from homology"/>
<accession>Q98BJ3</accession>
<evidence type="ECO:0000250" key="1"/>
<evidence type="ECO:0000255" key="2">
    <source>
        <dbReference type="HAMAP-Rule" id="MF_01057"/>
    </source>
</evidence>
<evidence type="ECO:0000256" key="3">
    <source>
        <dbReference type="SAM" id="MobiDB-lite"/>
    </source>
</evidence>
<evidence type="ECO:0000305" key="4"/>
<reference key="1">
    <citation type="journal article" date="2000" name="DNA Res.">
        <title>Complete genome structure of the nitrogen-fixing symbiotic bacterium Mesorhizobium loti.</title>
        <authorList>
            <person name="Kaneko T."/>
            <person name="Nakamura Y."/>
            <person name="Sato S."/>
            <person name="Asamizu E."/>
            <person name="Kato T."/>
            <person name="Sasamoto S."/>
            <person name="Watanabe A."/>
            <person name="Idesawa K."/>
            <person name="Ishikawa A."/>
            <person name="Kawashima K."/>
            <person name="Kimura T."/>
            <person name="Kishida Y."/>
            <person name="Kiyokawa C."/>
            <person name="Kohara M."/>
            <person name="Matsumoto M."/>
            <person name="Matsuno A."/>
            <person name="Mochizuki Y."/>
            <person name="Nakayama S."/>
            <person name="Nakazaki N."/>
            <person name="Shimpo S."/>
            <person name="Sugimoto M."/>
            <person name="Takeuchi C."/>
            <person name="Yamada M."/>
            <person name="Tabata S."/>
        </authorList>
    </citation>
    <scope>NUCLEOTIDE SEQUENCE [LARGE SCALE GENOMIC DNA]</scope>
    <source>
        <strain>LMG 29417 / CECT 9101 / MAFF 303099</strain>
    </source>
</reference>
<feature type="chain" id="PRO_0000171380" description="tRNA (guanine-N(7)-)-methyltransferase">
    <location>
        <begin position="1"/>
        <end position="233"/>
    </location>
</feature>
<feature type="region of interest" description="Disordered" evidence="3">
    <location>
        <begin position="1"/>
        <end position="23"/>
    </location>
</feature>
<feature type="active site" evidence="1">
    <location>
        <position position="138"/>
    </location>
</feature>
<feature type="binding site" evidence="2">
    <location>
        <position position="64"/>
    </location>
    <ligand>
        <name>S-adenosyl-L-methionine</name>
        <dbReference type="ChEBI" id="CHEBI:59789"/>
    </ligand>
</feature>
<feature type="binding site" evidence="2">
    <location>
        <position position="89"/>
    </location>
    <ligand>
        <name>S-adenosyl-L-methionine</name>
        <dbReference type="ChEBI" id="CHEBI:59789"/>
    </ligand>
</feature>
<feature type="binding site" evidence="2">
    <location>
        <position position="116"/>
    </location>
    <ligand>
        <name>S-adenosyl-L-methionine</name>
        <dbReference type="ChEBI" id="CHEBI:59789"/>
    </ligand>
</feature>
<feature type="binding site" evidence="2">
    <location>
        <position position="138"/>
    </location>
    <ligand>
        <name>S-adenosyl-L-methionine</name>
        <dbReference type="ChEBI" id="CHEBI:59789"/>
    </ligand>
</feature>
<feature type="binding site" evidence="2">
    <location>
        <position position="142"/>
    </location>
    <ligand>
        <name>substrate</name>
    </ligand>
</feature>
<feature type="binding site" evidence="2">
    <location>
        <position position="174"/>
    </location>
    <ligand>
        <name>substrate</name>
    </ligand>
</feature>
<feature type="binding site" evidence="2">
    <location>
        <begin position="212"/>
        <end position="215"/>
    </location>
    <ligand>
        <name>substrate</name>
    </ligand>
</feature>
<keyword id="KW-0489">Methyltransferase</keyword>
<keyword id="KW-0949">S-adenosyl-L-methionine</keyword>
<keyword id="KW-0808">Transferase</keyword>
<keyword id="KW-0819">tRNA processing</keyword>